<proteinExistence type="inferred from homology"/>
<dbReference type="EC" id="4.2.1.90" evidence="1"/>
<dbReference type="EMBL" id="CP001044">
    <property type="protein sequence ID" value="ACC72621.1"/>
    <property type="molecule type" value="Genomic_DNA"/>
</dbReference>
<dbReference type="RefSeq" id="WP_012402794.1">
    <property type="nucleotide sequence ID" value="NC_010623.1"/>
</dbReference>
<dbReference type="SMR" id="B2JLI8"/>
<dbReference type="STRING" id="391038.Bphy_3468"/>
<dbReference type="KEGG" id="bph:Bphy_3468"/>
<dbReference type="eggNOG" id="COG4948">
    <property type="taxonomic scope" value="Bacteria"/>
</dbReference>
<dbReference type="HOGENOM" id="CLU_030273_1_0_4"/>
<dbReference type="OrthoDB" id="103536at2"/>
<dbReference type="Proteomes" id="UP000001192">
    <property type="component" value="Chromosome 2"/>
</dbReference>
<dbReference type="GO" id="GO:0050032">
    <property type="term" value="F:L-rhamnonate dehydratase activity"/>
    <property type="evidence" value="ECO:0007669"/>
    <property type="project" value="UniProtKB-UniRule"/>
</dbReference>
<dbReference type="GO" id="GO:0000287">
    <property type="term" value="F:magnesium ion binding"/>
    <property type="evidence" value="ECO:0007669"/>
    <property type="project" value="UniProtKB-UniRule"/>
</dbReference>
<dbReference type="GO" id="GO:0009063">
    <property type="term" value="P:amino acid catabolic process"/>
    <property type="evidence" value="ECO:0007669"/>
    <property type="project" value="InterPro"/>
</dbReference>
<dbReference type="GO" id="GO:0016052">
    <property type="term" value="P:carbohydrate catabolic process"/>
    <property type="evidence" value="ECO:0007669"/>
    <property type="project" value="TreeGrafter"/>
</dbReference>
<dbReference type="CDD" id="cd03327">
    <property type="entry name" value="MR_like_2"/>
    <property type="match status" value="1"/>
</dbReference>
<dbReference type="FunFam" id="3.20.20.120:FF:000005">
    <property type="entry name" value="Putative L-rhamnonate dehydratase"/>
    <property type="match status" value="1"/>
</dbReference>
<dbReference type="Gene3D" id="3.20.20.120">
    <property type="entry name" value="Enolase-like C-terminal domain"/>
    <property type="match status" value="1"/>
</dbReference>
<dbReference type="Gene3D" id="3.30.390.10">
    <property type="entry name" value="Enolase-like, N-terminal domain"/>
    <property type="match status" value="1"/>
</dbReference>
<dbReference type="HAMAP" id="MF_01288">
    <property type="entry name" value="Rhamnon_dehydrat"/>
    <property type="match status" value="1"/>
</dbReference>
<dbReference type="InterPro" id="IPR036849">
    <property type="entry name" value="Enolase-like_C_sf"/>
</dbReference>
<dbReference type="InterPro" id="IPR029017">
    <property type="entry name" value="Enolase-like_N"/>
</dbReference>
<dbReference type="InterPro" id="IPR029065">
    <property type="entry name" value="Enolase_C-like"/>
</dbReference>
<dbReference type="InterPro" id="IPR023444">
    <property type="entry name" value="L-Rhamnon_dehydrat"/>
</dbReference>
<dbReference type="InterPro" id="IPR018110">
    <property type="entry name" value="Mandel_Rmase/mucon_lact_enz_CS"/>
</dbReference>
<dbReference type="InterPro" id="IPR013342">
    <property type="entry name" value="Mandelate_racemase_C"/>
</dbReference>
<dbReference type="InterPro" id="IPR013341">
    <property type="entry name" value="Mandelate_racemase_N_dom"/>
</dbReference>
<dbReference type="InterPro" id="IPR046945">
    <property type="entry name" value="RHMD-like"/>
</dbReference>
<dbReference type="NCBIfam" id="NF011968">
    <property type="entry name" value="PRK15440.1"/>
    <property type="match status" value="1"/>
</dbReference>
<dbReference type="PANTHER" id="PTHR13794">
    <property type="entry name" value="ENOLASE SUPERFAMILY, MANDELATE RACEMASE"/>
    <property type="match status" value="1"/>
</dbReference>
<dbReference type="PANTHER" id="PTHR13794:SF58">
    <property type="entry name" value="MITOCHONDRIAL ENOLASE SUPERFAMILY MEMBER 1"/>
    <property type="match status" value="1"/>
</dbReference>
<dbReference type="Pfam" id="PF13378">
    <property type="entry name" value="MR_MLE_C"/>
    <property type="match status" value="1"/>
</dbReference>
<dbReference type="Pfam" id="PF02746">
    <property type="entry name" value="MR_MLE_N"/>
    <property type="match status" value="1"/>
</dbReference>
<dbReference type="SFLD" id="SFLDG00179">
    <property type="entry name" value="mandelate_racemase"/>
    <property type="match status" value="1"/>
</dbReference>
<dbReference type="SFLD" id="SFLDF00006">
    <property type="entry name" value="rhamnonate_dehydratase"/>
    <property type="match status" value="1"/>
</dbReference>
<dbReference type="SMART" id="SM00922">
    <property type="entry name" value="MR_MLE"/>
    <property type="match status" value="1"/>
</dbReference>
<dbReference type="SUPFAM" id="SSF51604">
    <property type="entry name" value="Enolase C-terminal domain-like"/>
    <property type="match status" value="1"/>
</dbReference>
<dbReference type="SUPFAM" id="SSF54826">
    <property type="entry name" value="Enolase N-terminal domain-like"/>
    <property type="match status" value="1"/>
</dbReference>
<dbReference type="PROSITE" id="PS00908">
    <property type="entry name" value="MR_MLE_1"/>
    <property type="match status" value="1"/>
</dbReference>
<reference key="1">
    <citation type="journal article" date="2014" name="Stand. Genomic Sci.">
        <title>Complete genome sequence of Burkholderia phymatum STM815(T), a broad host range and efficient nitrogen-fixing symbiont of Mimosa species.</title>
        <authorList>
            <person name="Moulin L."/>
            <person name="Klonowska A."/>
            <person name="Caroline B."/>
            <person name="Booth K."/>
            <person name="Vriezen J.A."/>
            <person name="Melkonian R."/>
            <person name="James E.K."/>
            <person name="Young J.P."/>
            <person name="Bena G."/>
            <person name="Hauser L."/>
            <person name="Land M."/>
            <person name="Kyrpides N."/>
            <person name="Bruce D."/>
            <person name="Chain P."/>
            <person name="Copeland A."/>
            <person name="Pitluck S."/>
            <person name="Woyke T."/>
            <person name="Lizotte-Waniewski M."/>
            <person name="Bristow J."/>
            <person name="Riley M."/>
        </authorList>
    </citation>
    <scope>NUCLEOTIDE SEQUENCE [LARGE SCALE GENOMIC DNA]</scope>
    <source>
        <strain>DSM 17167 / CIP 108236 / LMG 21445 / STM815</strain>
    </source>
</reference>
<keyword id="KW-0456">Lyase</keyword>
<keyword id="KW-0460">Magnesium</keyword>
<keyword id="KW-0479">Metal-binding</keyword>
<keyword id="KW-1185">Reference proteome</keyword>
<accession>B2JLI8</accession>
<feature type="chain" id="PRO_0000351687" description="L-rhamnonate dehydratase">
    <location>
        <begin position="1"/>
        <end position="392"/>
    </location>
</feature>
<feature type="active site" description="Proton acceptor" evidence="1">
    <location>
        <position position="318"/>
    </location>
</feature>
<feature type="binding site" evidence="1">
    <location>
        <position position="22"/>
    </location>
    <ligand>
        <name>substrate</name>
    </ligand>
</feature>
<feature type="binding site" evidence="1">
    <location>
        <position position="48"/>
    </location>
    <ligand>
        <name>substrate</name>
    </ligand>
</feature>
<feature type="binding site" evidence="1">
    <location>
        <position position="214"/>
    </location>
    <ligand>
        <name>Mg(2+)</name>
        <dbReference type="ChEBI" id="CHEBI:18420"/>
    </ligand>
</feature>
<feature type="binding site" evidence="1">
    <location>
        <position position="240"/>
    </location>
    <ligand>
        <name>Mg(2+)</name>
        <dbReference type="ChEBI" id="CHEBI:18420"/>
    </ligand>
</feature>
<feature type="binding site" evidence="1">
    <location>
        <position position="268"/>
    </location>
    <ligand>
        <name>Mg(2+)</name>
        <dbReference type="ChEBI" id="CHEBI:18420"/>
    </ligand>
</feature>
<feature type="binding site" evidence="1">
    <location>
        <position position="338"/>
    </location>
    <ligand>
        <name>substrate</name>
    </ligand>
</feature>
<feature type="site" description="Increases basicity of active site His" evidence="1">
    <location>
        <position position="291"/>
    </location>
</feature>
<feature type="site" description="Transition state stabilizer" evidence="1">
    <location>
        <position position="338"/>
    </location>
</feature>
<protein>
    <recommendedName>
        <fullName evidence="1">L-rhamnonate dehydratase</fullName>
        <shortName evidence="1">RhamD</shortName>
        <ecNumber evidence="1">4.2.1.90</ecNumber>
    </recommendedName>
</protein>
<sequence>MAMPSIRHVRAFVVRGGGADYHDQADGHWIDDHISTPMARYPEYRQSRQSFGINVLGTLVVEIEASDGTVGFAVTTGGEIGAFIVEKHLARFLEGQLVTDIEKMWDQMYFSTLYYGRKGVVLNTISGVDLALWDLLAKVRKEPVYQLLGGPVRDELQFYATGARPDLAKEMGFIGGKLPLQHSPAEGEEGLRKNIDKLAEMRGRVGGDFWLMYDCWMSLDVTYATKLAKAAHEHGLKWIEEALPPDDYWGYAELRRNVPRGMMVSTGEHEATRWGFRMLLEMGCCDLIQPDVGWCGGITELVKISALADAHNVLVVPHGSSVYSYHFVVTRHNSPFAEFLMMAPKADQVVPMFTPLLLDEPVPVNGRMRVPDTPGFGVRLNPECKLERPYQH</sequence>
<name>RHMD_PARP8</name>
<organism>
    <name type="scientific">Paraburkholderia phymatum (strain DSM 17167 / CIP 108236 / LMG 21445 / STM815)</name>
    <name type="common">Burkholderia phymatum</name>
    <dbReference type="NCBI Taxonomy" id="391038"/>
    <lineage>
        <taxon>Bacteria</taxon>
        <taxon>Pseudomonadati</taxon>
        <taxon>Pseudomonadota</taxon>
        <taxon>Betaproteobacteria</taxon>
        <taxon>Burkholderiales</taxon>
        <taxon>Burkholderiaceae</taxon>
        <taxon>Paraburkholderia</taxon>
    </lineage>
</organism>
<comment type="function">
    <text evidence="1">Catalyzes the dehydration of L-rhamnonate to 2-keto-3-deoxy-L-rhamnonate (KDR).</text>
</comment>
<comment type="catalytic activity">
    <reaction evidence="1">
        <text>L-rhamnonate = 2-dehydro-3-deoxy-L-rhamnonate + H2O</text>
        <dbReference type="Rhea" id="RHEA:23080"/>
        <dbReference type="ChEBI" id="CHEBI:15377"/>
        <dbReference type="ChEBI" id="CHEBI:58118"/>
        <dbReference type="ChEBI" id="CHEBI:58371"/>
        <dbReference type="EC" id="4.2.1.90"/>
    </reaction>
</comment>
<comment type="cofactor">
    <cofactor evidence="1">
        <name>Mg(2+)</name>
        <dbReference type="ChEBI" id="CHEBI:18420"/>
    </cofactor>
    <text evidence="1">Binds 1 Mg(2+) ion per subunit.</text>
</comment>
<comment type="subunit">
    <text evidence="1">Homooctamer; tetramer of dimers.</text>
</comment>
<comment type="miscellaneous">
    <text evidence="1">Reaction proceeds via a syn dehydration.</text>
</comment>
<comment type="similarity">
    <text evidence="1">Belongs to the mandelate racemase/muconate lactonizing enzyme family. RhamD subfamily.</text>
</comment>
<evidence type="ECO:0000255" key="1">
    <source>
        <dbReference type="HAMAP-Rule" id="MF_01288"/>
    </source>
</evidence>
<gene>
    <name evidence="1" type="primary">rhmD</name>
    <name type="ordered locus">Bphy_3468</name>
</gene>